<feature type="signal peptide" evidence="1">
    <location>
        <begin position="1"/>
        <end position="23"/>
    </location>
</feature>
<feature type="chain" id="PRO_0000016436" description="Interferon gamma">
    <location>
        <begin position="24"/>
        <end position="166"/>
    </location>
</feature>
<feature type="modified residue" description="Pyrrolidone carboxylic acid" evidence="2">
    <location>
        <position position="24"/>
    </location>
</feature>
<feature type="glycosylation site" description="N-linked (GlcNAc...) asparagine" evidence="4">
    <location>
        <position position="39"/>
    </location>
</feature>
<feature type="glycosylation site" description="N-linked (GlcNAc...) asparagine" evidence="4">
    <location>
        <position position="106"/>
    </location>
</feature>
<reference key="1">
    <citation type="submission" date="2003-04" db="EMBL/GenBank/DDBJ databases">
        <title>Cloning and sequence analysis of cytokine cDNAs of llama and camel.</title>
        <authorList>
            <person name="Odbileg R."/>
            <person name="Lee S.-I."/>
            <person name="Yoshida R."/>
            <person name="Chang K.-S."/>
            <person name="Ohashi K."/>
            <person name="Sugimoto C."/>
            <person name="Onuma M."/>
        </authorList>
    </citation>
    <scope>NUCLEOTIDE SEQUENCE [MRNA]</scope>
</reference>
<evidence type="ECO:0000250" key="1"/>
<evidence type="ECO:0000250" key="2">
    <source>
        <dbReference type="UniProtKB" id="P01579"/>
    </source>
</evidence>
<evidence type="ECO:0000250" key="3">
    <source>
        <dbReference type="UniProtKB" id="P01580"/>
    </source>
</evidence>
<evidence type="ECO:0000255" key="4"/>
<evidence type="ECO:0000305" key="5"/>
<proteinExistence type="evidence at transcript level"/>
<keyword id="KW-0051">Antiviral defense</keyword>
<keyword id="KW-0202">Cytokine</keyword>
<keyword id="KW-0325">Glycoprotein</keyword>
<keyword id="KW-0341">Growth regulation</keyword>
<keyword id="KW-0873">Pyrrolidone carboxylic acid</keyword>
<keyword id="KW-1185">Reference proteome</keyword>
<keyword id="KW-0964">Secreted</keyword>
<keyword id="KW-0732">Signal</keyword>
<gene>
    <name type="primary">IFNG</name>
</gene>
<name>IFNG_CAMBA</name>
<comment type="function">
    <text evidence="2 3">Type II interferon produced by immune cells such as T-cells and NK cells that plays crucial roles in antimicrobial, antiviral, and antitumor responses by activating effector immune cells and enhancing antigen presentation. Primarily signals through the JAK-STAT pathway after interaction with its receptor IFNGR1 to affect gene regulation. Upon IFNG binding, IFNGR1 intracellular domain opens out to allow association of downstream signaling components JAK2, JAK1 and STAT1, leading to STAT1 activation, nuclear translocation and transcription of IFNG-regulated genes. Many of the induced genes are transcription factors such as IRF1 that are able to further drive regulation of a next wave of transcription. Plays a role in class I antigen presentation pathway by inducing a replacement of catalytic proteasome subunits with immunoproteasome subunits. In turn, increases the quantity, quality, and repertoire of peptides for class I MHC loading. Increases the efficiency of peptide generation also by inducing the expression of activator PA28 that associates with the proteasome and alters its proteolytic cleavage preference. Up-regulates as well MHC II complexes on the cell surface by promoting expression of several key molecules such as cathepsins B/CTSB, H/CTSH, and L/CTSL (By similarity). Participates in the regulation of hematopoietic stem cells during development and under homeostatic conditions by affecting their development, quiescence, and differentiation (By similarity).</text>
</comment>
<comment type="subunit">
    <text evidence="2">Homodimer. Interacts with IFNGR1 (via extracellular domain); this interaction promotes IFNGR1 dimerization.</text>
</comment>
<comment type="subcellular location">
    <subcellularLocation>
        <location evidence="2">Secreted</location>
    </subcellularLocation>
</comment>
<comment type="tissue specificity">
    <text>Released primarily from activated T lymphocytes.</text>
</comment>
<comment type="similarity">
    <text evidence="5">Belongs to the type II (or gamma) interferon family.</text>
</comment>
<sequence>MNYTSYILAFQLCVILGSSGCYCQAPFFDEIENLKKYFNASNPDVADGGPLFLEILKNWKEESDKKIIQSQIVSFYFKLFENLKDNQIIQRSMDIIKQDMFQKFLNGSSEKLEDFKKLIQIPVDNLKVQRKAISELIKVMNDLSPKSNLRKRKRSQNLFRGRRASK</sequence>
<accession>Q865W6</accession>
<dbReference type="EMBL" id="AB107657">
    <property type="protein sequence ID" value="BAC75394.1"/>
    <property type="molecule type" value="mRNA"/>
</dbReference>
<dbReference type="SMR" id="Q865W6"/>
<dbReference type="GlyCosmos" id="Q865W6">
    <property type="glycosylation" value="2 sites, No reported glycans"/>
</dbReference>
<dbReference type="Proteomes" id="UP000694950">
    <property type="component" value="Unplaced"/>
</dbReference>
<dbReference type="GO" id="GO:0005615">
    <property type="term" value="C:extracellular space"/>
    <property type="evidence" value="ECO:0007669"/>
    <property type="project" value="UniProtKB-KW"/>
</dbReference>
<dbReference type="GO" id="GO:0005125">
    <property type="term" value="F:cytokine activity"/>
    <property type="evidence" value="ECO:0007669"/>
    <property type="project" value="UniProtKB-KW"/>
</dbReference>
<dbReference type="GO" id="GO:0005133">
    <property type="term" value="F:type II interferon receptor binding"/>
    <property type="evidence" value="ECO:0007669"/>
    <property type="project" value="InterPro"/>
</dbReference>
<dbReference type="GO" id="GO:0002250">
    <property type="term" value="P:adaptive immune response"/>
    <property type="evidence" value="ECO:0007669"/>
    <property type="project" value="TreeGrafter"/>
</dbReference>
<dbReference type="GO" id="GO:0051607">
    <property type="term" value="P:defense response to virus"/>
    <property type="evidence" value="ECO:0007669"/>
    <property type="project" value="UniProtKB-KW"/>
</dbReference>
<dbReference type="GO" id="GO:0006959">
    <property type="term" value="P:humoral immune response"/>
    <property type="evidence" value="ECO:0007669"/>
    <property type="project" value="TreeGrafter"/>
</dbReference>
<dbReference type="FunFam" id="1.20.1250.10:FF:000080">
    <property type="entry name" value="Interferon gamma"/>
    <property type="match status" value="1"/>
</dbReference>
<dbReference type="Gene3D" id="1.20.1250.10">
    <property type="match status" value="1"/>
</dbReference>
<dbReference type="InterPro" id="IPR009079">
    <property type="entry name" value="4_helix_cytokine-like_core"/>
</dbReference>
<dbReference type="InterPro" id="IPR002069">
    <property type="entry name" value="Interferon_gamma"/>
</dbReference>
<dbReference type="PANTHER" id="PTHR11419">
    <property type="entry name" value="INTERFERON GAMMA"/>
    <property type="match status" value="1"/>
</dbReference>
<dbReference type="PANTHER" id="PTHR11419:SF0">
    <property type="entry name" value="INTERFERON GAMMA"/>
    <property type="match status" value="1"/>
</dbReference>
<dbReference type="Pfam" id="PF00714">
    <property type="entry name" value="IFN-gamma"/>
    <property type="match status" value="1"/>
</dbReference>
<dbReference type="PIRSF" id="PIRSF001936">
    <property type="entry name" value="IFN-gamma"/>
    <property type="match status" value="1"/>
</dbReference>
<dbReference type="SUPFAM" id="SSF47266">
    <property type="entry name" value="4-helical cytokines"/>
    <property type="match status" value="1"/>
</dbReference>
<organism>
    <name type="scientific">Camelus bactrianus</name>
    <name type="common">Bactrian camel</name>
    <dbReference type="NCBI Taxonomy" id="9837"/>
    <lineage>
        <taxon>Eukaryota</taxon>
        <taxon>Metazoa</taxon>
        <taxon>Chordata</taxon>
        <taxon>Craniata</taxon>
        <taxon>Vertebrata</taxon>
        <taxon>Euteleostomi</taxon>
        <taxon>Mammalia</taxon>
        <taxon>Eutheria</taxon>
        <taxon>Laurasiatheria</taxon>
        <taxon>Artiodactyla</taxon>
        <taxon>Tylopoda</taxon>
        <taxon>Camelidae</taxon>
        <taxon>Camelus</taxon>
    </lineage>
</organism>
<protein>
    <recommendedName>
        <fullName>Interferon gamma</fullName>
        <shortName>IFN-gamma</shortName>
    </recommendedName>
</protein>